<comment type="function">
    <text>Plays an essential role for the viral pathogenicity.</text>
</comment>
<comment type="similarity">
    <text evidence="2">Belongs to the novirhabdovirus NV protein family.</text>
</comment>
<protein>
    <recommendedName>
        <fullName>Non-virion protein</fullName>
    </recommendedName>
</protein>
<organismHost>
    <name type="scientific">Gobiosoma bosc</name>
    <name type="common">Naked goby</name>
    <name type="synonym">Gobius bosc</name>
    <dbReference type="NCBI Taxonomy" id="203314"/>
</organismHost>
<evidence type="ECO:0000256" key="1">
    <source>
        <dbReference type="SAM" id="MobiDB-lite"/>
    </source>
</evidence>
<evidence type="ECO:0000305" key="2"/>
<sequence>MPGNNHNDRPVALIMSRLSRDPRDCIHHTVDTRGMTPGKIIHQVIPPHPTQMRHTNRPSPPVILNLQILSEGGHVCARDVDTADPVPRAGPERTIQWGTDRDATEELASPAPEEIYEDNDSW</sequence>
<keyword id="KW-1185">Reference proteome</keyword>
<name>NV_SHRV</name>
<reference key="1">
    <citation type="submission" date="1999-05" db="EMBL/GenBank/DDBJ databases">
        <title>The complete genomic sequence of snakehead rhabdovirus.</title>
        <authorList>
            <person name="Johnson M.C."/>
            <person name="Bell R.H."/>
            <person name="Leong J.C."/>
        </authorList>
    </citation>
    <scope>NUCLEOTIDE SEQUENCE [GENOMIC RNA]</scope>
</reference>
<organism>
    <name type="scientific">Snakehead rhabdovirus</name>
    <name type="common">SHRV</name>
    <dbReference type="NCBI Taxonomy" id="103603"/>
    <lineage>
        <taxon>Viruses</taxon>
        <taxon>Riboviria</taxon>
        <taxon>Orthornavirae</taxon>
        <taxon>Negarnaviricota</taxon>
        <taxon>Haploviricotina</taxon>
        <taxon>Monjiviricetes</taxon>
        <taxon>Mononegavirales</taxon>
        <taxon>Rhabdoviridae</taxon>
        <taxon>Gammarhabdovirinae</taxon>
        <taxon>Novirhabdovirus</taxon>
        <taxon>Novirhabdovirus snakehead</taxon>
    </lineage>
</organism>
<gene>
    <name type="primary">NV</name>
</gene>
<feature type="chain" id="PRO_0000299210" description="Non-virion protein">
    <location>
        <begin position="1"/>
        <end position="122"/>
    </location>
</feature>
<feature type="region of interest" description="Disordered" evidence="1">
    <location>
        <begin position="80"/>
        <end position="122"/>
    </location>
</feature>
<proteinExistence type="inferred from homology"/>
<accession>Q9QJT5</accession>
<dbReference type="EMBL" id="AF147498">
    <property type="protein sequence ID" value="AAD56770.1"/>
    <property type="molecule type" value="Genomic_RNA"/>
</dbReference>
<dbReference type="RefSeq" id="NP_050584.1">
    <property type="nucleotide sequence ID" value="NC_000903.1"/>
</dbReference>
<dbReference type="GeneID" id="1457773"/>
<dbReference type="KEGG" id="vg:1457773"/>
<dbReference type="Proteomes" id="UP000007219">
    <property type="component" value="Genome"/>
</dbReference>